<feature type="chain" id="PRO_0000128696" description="Uncharacterized protein HP_1070">
    <location>
        <begin position="1"/>
        <end position="84"/>
    </location>
</feature>
<feature type="sequence variant" description="In strain: NCTC 11638.">
    <original>L</original>
    <variation>R</variation>
    <location>
        <position position="2"/>
    </location>
</feature>
<feature type="sequence variant" description="In strain: NCTC 11638.">
    <original>L</original>
    <variation>F</variation>
    <location>
        <position position="24"/>
    </location>
</feature>
<feature type="sequence variant" description="In strain: NCTC 11638.">
    <original>Q</original>
    <variation>K</variation>
    <location>
        <position position="41"/>
    </location>
</feature>
<feature type="sequence variant" description="In strain: NCTC 11638.">
    <original>S</original>
    <variation>F</variation>
    <location>
        <position position="49"/>
    </location>
</feature>
<feature type="sequence variant" description="In strain: NCTC 11638.">
    <original>K</original>
    <variation>E</variation>
    <location>
        <position position="51"/>
    </location>
</feature>
<feature type="sequence variant" description="In strain: NCTC 11638.">
    <original>LL</original>
    <variation>IP</variation>
    <location>
        <begin position="60"/>
        <end position="61"/>
    </location>
</feature>
<feature type="sequence variant" description="In strain: NCTC 11638.">
    <original>I</original>
    <variation>M</variation>
    <location>
        <position position="67"/>
    </location>
</feature>
<feature type="sequence variant" description="In strain: NCTC 11638.">
    <original>E</original>
    <variation>K</variation>
    <location>
        <position position="74"/>
    </location>
</feature>
<feature type="sequence variant" description="In strain: NCTC 11638.">
    <original>S</original>
    <variation>F</variation>
    <location>
        <position position="81"/>
    </location>
</feature>
<gene>
    <name type="ordered locus">HP_1070</name>
</gene>
<sequence length="84" mass="10006">MLAYKQIFDKGLKPYYKHSVCLKLFFRFCFLKTHAYQQRYQAFALTLFSCKFFNACKIFLLAIGFKIVFIPILEAKLKRVSNAY</sequence>
<proteinExistence type="predicted"/>
<reference key="1">
    <citation type="journal article" date="1997" name="J. Bacteriol.">
        <title>Identification and characterization of an operon of Helicobacter pylori that is involved in motility and stress adaptation.</title>
        <authorList>
            <person name="Beier D."/>
            <person name="Spohn G."/>
            <person name="Rappuoli R."/>
            <person name="Scarlato V."/>
        </authorList>
    </citation>
    <scope>NUCLEOTIDE SEQUENCE [GENOMIC DNA]</scope>
    <source>
        <strain>DSM 4867 / CCUG 17874 / NCTC 11638</strain>
    </source>
</reference>
<reference key="2">
    <citation type="journal article" date="1997" name="Nature">
        <title>The complete genome sequence of the gastric pathogen Helicobacter pylori.</title>
        <authorList>
            <person name="Tomb J.-F."/>
            <person name="White O."/>
            <person name="Kerlavage A.R."/>
            <person name="Clayton R.A."/>
            <person name="Sutton G.G."/>
            <person name="Fleischmann R.D."/>
            <person name="Ketchum K.A."/>
            <person name="Klenk H.-P."/>
            <person name="Gill S.R."/>
            <person name="Dougherty B.A."/>
            <person name="Nelson K.E."/>
            <person name="Quackenbush J."/>
            <person name="Zhou L."/>
            <person name="Kirkness E.F."/>
            <person name="Peterson S.N."/>
            <person name="Loftus B.J."/>
            <person name="Richardson D.L."/>
            <person name="Dodson R.J."/>
            <person name="Khalak H.G."/>
            <person name="Glodek A."/>
            <person name="McKenney K."/>
            <person name="FitzGerald L.M."/>
            <person name="Lee N."/>
            <person name="Adams M.D."/>
            <person name="Hickey E.K."/>
            <person name="Berg D.E."/>
            <person name="Gocayne J.D."/>
            <person name="Utterback T.R."/>
            <person name="Peterson J.D."/>
            <person name="Kelley J.M."/>
            <person name="Cotton M.D."/>
            <person name="Weidman J.F."/>
            <person name="Fujii C."/>
            <person name="Bowman C."/>
            <person name="Watthey L."/>
            <person name="Wallin E."/>
            <person name="Hayes W.S."/>
            <person name="Borodovsky M."/>
            <person name="Karp P.D."/>
            <person name="Smith H.O."/>
            <person name="Fraser C.M."/>
            <person name="Venter J.C."/>
        </authorList>
    </citation>
    <scope>NUCLEOTIDE SEQUENCE [LARGE SCALE GENOMIC DNA]</scope>
    <source>
        <strain>ATCC 700392 / 26695</strain>
    </source>
</reference>
<name>Y1070_HELPY</name>
<organism>
    <name type="scientific">Helicobacter pylori (strain ATCC 700392 / 26695)</name>
    <name type="common">Campylobacter pylori</name>
    <dbReference type="NCBI Taxonomy" id="85962"/>
    <lineage>
        <taxon>Bacteria</taxon>
        <taxon>Pseudomonadati</taxon>
        <taxon>Campylobacterota</taxon>
        <taxon>Epsilonproteobacteria</taxon>
        <taxon>Campylobacterales</taxon>
        <taxon>Helicobacteraceae</taxon>
        <taxon>Helicobacter</taxon>
    </lineage>
</organism>
<protein>
    <recommendedName>
        <fullName>Uncharacterized protein HP_1070</fullName>
    </recommendedName>
    <alternativeName>
        <fullName>ORFX</fullName>
    </alternativeName>
</protein>
<dbReference type="EMBL" id="U97567">
    <property type="protein sequence ID" value="AAB66378.1"/>
    <property type="molecule type" value="Genomic_DNA"/>
</dbReference>
<dbReference type="EMBL" id="AE000511">
    <property type="protein sequence ID" value="AAD08121.1"/>
    <property type="molecule type" value="Genomic_DNA"/>
</dbReference>
<dbReference type="PIR" id="F64653">
    <property type="entry name" value="F64653"/>
</dbReference>
<dbReference type="RefSeq" id="NP_207861.1">
    <property type="nucleotide sequence ID" value="NC_000915.1"/>
</dbReference>
<dbReference type="RefSeq" id="WP_000881891.1">
    <property type="nucleotide sequence ID" value="NC_018939.1"/>
</dbReference>
<dbReference type="STRING" id="85962.HP_1070"/>
<dbReference type="PaxDb" id="85962-C694_05530"/>
<dbReference type="EnsemblBacteria" id="AAD08121">
    <property type="protein sequence ID" value="AAD08121"/>
    <property type="gene ID" value="HP_1070"/>
</dbReference>
<dbReference type="KEGG" id="heo:C694_05530"/>
<dbReference type="KEGG" id="hpy:HP_1070"/>
<dbReference type="PATRIC" id="fig|85962.47.peg.1149"/>
<dbReference type="InParanoid" id="O07680"/>
<dbReference type="Proteomes" id="UP000000429">
    <property type="component" value="Chromosome"/>
</dbReference>
<accession>O07680</accession>
<keyword id="KW-1185">Reference proteome</keyword>